<keyword id="KW-0963">Cytoplasm</keyword>
<keyword id="KW-0378">Hydrolase</keyword>
<keyword id="KW-1185">Reference proteome</keyword>
<keyword id="KW-0694">RNA-binding</keyword>
<keyword id="KW-0820">tRNA-binding</keyword>
<feature type="chain" id="PRO_0000187863" description="Peptidyl-tRNA hydrolase">
    <location>
        <begin position="1"/>
        <end position="196"/>
    </location>
</feature>
<feature type="active site" description="Proton acceptor" evidence="1">
    <location>
        <position position="22"/>
    </location>
</feature>
<feature type="binding site" evidence="1">
    <location>
        <position position="17"/>
    </location>
    <ligand>
        <name>tRNA</name>
        <dbReference type="ChEBI" id="CHEBI:17843"/>
    </ligand>
</feature>
<feature type="binding site" evidence="1">
    <location>
        <position position="68"/>
    </location>
    <ligand>
        <name>tRNA</name>
        <dbReference type="ChEBI" id="CHEBI:17843"/>
    </ligand>
</feature>
<feature type="binding site" evidence="1">
    <location>
        <position position="70"/>
    </location>
    <ligand>
        <name>tRNA</name>
        <dbReference type="ChEBI" id="CHEBI:17843"/>
    </ligand>
</feature>
<feature type="binding site" evidence="1">
    <location>
        <position position="116"/>
    </location>
    <ligand>
        <name>tRNA</name>
        <dbReference type="ChEBI" id="CHEBI:17843"/>
    </ligand>
</feature>
<feature type="site" description="Discriminates between blocked and unblocked aminoacyl-tRNA" evidence="1">
    <location>
        <position position="12"/>
    </location>
</feature>
<feature type="site" description="Stabilizes the basic form of H active site to accept a proton" evidence="1">
    <location>
        <position position="95"/>
    </location>
</feature>
<accession>Q8ZEY4</accession>
<accession>Q0WFE1</accession>
<evidence type="ECO:0000255" key="1">
    <source>
        <dbReference type="HAMAP-Rule" id="MF_00083"/>
    </source>
</evidence>
<evidence type="ECO:0000305" key="2"/>
<evidence type="ECO:0000312" key="3">
    <source>
        <dbReference type="EMBL" id="AAM85856.1"/>
    </source>
</evidence>
<evidence type="ECO:0000312" key="4">
    <source>
        <dbReference type="EMBL" id="AAS62079.1"/>
    </source>
</evidence>
<evidence type="ECO:0000312" key="5">
    <source>
        <dbReference type="EMBL" id="CAL20648.1"/>
    </source>
</evidence>
<reference evidence="5" key="1">
    <citation type="journal article" date="2001" name="Nature">
        <title>Genome sequence of Yersinia pestis, the causative agent of plague.</title>
        <authorList>
            <person name="Parkhill J."/>
            <person name="Wren B.W."/>
            <person name="Thomson N.R."/>
            <person name="Titball R.W."/>
            <person name="Holden M.T.G."/>
            <person name="Prentice M.B."/>
            <person name="Sebaihia M."/>
            <person name="James K.D."/>
            <person name="Churcher C.M."/>
            <person name="Mungall K.L."/>
            <person name="Baker S."/>
            <person name="Basham D."/>
            <person name="Bentley S.D."/>
            <person name="Brooks K."/>
            <person name="Cerdeno-Tarraga A.-M."/>
            <person name="Chillingworth T."/>
            <person name="Cronin A."/>
            <person name="Davies R.M."/>
            <person name="Davis P."/>
            <person name="Dougan G."/>
            <person name="Feltwell T."/>
            <person name="Hamlin N."/>
            <person name="Holroyd S."/>
            <person name="Jagels K."/>
            <person name="Karlyshev A.V."/>
            <person name="Leather S."/>
            <person name="Moule S."/>
            <person name="Oyston P.C.F."/>
            <person name="Quail M.A."/>
            <person name="Rutherford K.M."/>
            <person name="Simmonds M."/>
            <person name="Skelton J."/>
            <person name="Stevens K."/>
            <person name="Whitehead S."/>
            <person name="Barrell B.G."/>
        </authorList>
    </citation>
    <scope>NUCLEOTIDE SEQUENCE [LARGE SCALE GENOMIC DNA]</scope>
    <source>
        <strain>CO-92 / Biovar Orientalis</strain>
    </source>
</reference>
<reference evidence="3" key="2">
    <citation type="journal article" date="2002" name="J. Bacteriol.">
        <title>Genome sequence of Yersinia pestis KIM.</title>
        <authorList>
            <person name="Deng W."/>
            <person name="Burland V."/>
            <person name="Plunkett G. III"/>
            <person name="Boutin A."/>
            <person name="Mayhew G.F."/>
            <person name="Liss P."/>
            <person name="Perna N.T."/>
            <person name="Rose D.J."/>
            <person name="Mau B."/>
            <person name="Zhou S."/>
            <person name="Schwartz D.C."/>
            <person name="Fetherston J.D."/>
            <person name="Lindler L.E."/>
            <person name="Brubaker R.R."/>
            <person name="Plano G.V."/>
            <person name="Straley S.C."/>
            <person name="McDonough K.A."/>
            <person name="Nilles M.L."/>
            <person name="Matson J.S."/>
            <person name="Blattner F.R."/>
            <person name="Perry R.D."/>
        </authorList>
    </citation>
    <scope>NUCLEOTIDE SEQUENCE [LARGE SCALE GENOMIC DNA]</scope>
    <source>
        <strain>KIM10+ / Biovar Mediaevalis</strain>
    </source>
</reference>
<reference evidence="4" key="3">
    <citation type="journal article" date="2004" name="DNA Res.">
        <title>Complete genome sequence of Yersinia pestis strain 91001, an isolate avirulent to humans.</title>
        <authorList>
            <person name="Song Y."/>
            <person name="Tong Z."/>
            <person name="Wang J."/>
            <person name="Wang L."/>
            <person name="Guo Z."/>
            <person name="Han Y."/>
            <person name="Zhang J."/>
            <person name="Pei D."/>
            <person name="Zhou D."/>
            <person name="Qin H."/>
            <person name="Pang X."/>
            <person name="Han Y."/>
            <person name="Zhai J."/>
            <person name="Li M."/>
            <person name="Cui B."/>
            <person name="Qi Z."/>
            <person name="Jin L."/>
            <person name="Dai R."/>
            <person name="Chen F."/>
            <person name="Li S."/>
            <person name="Ye C."/>
            <person name="Du Z."/>
            <person name="Lin W."/>
            <person name="Wang J."/>
            <person name="Yu J."/>
            <person name="Yang H."/>
            <person name="Wang J."/>
            <person name="Huang P."/>
            <person name="Yang R."/>
        </authorList>
    </citation>
    <scope>NUCLEOTIDE SEQUENCE [LARGE SCALE GENOMIC DNA]</scope>
    <source>
        <strain>91001 / Biovar Mediaevalis</strain>
    </source>
</reference>
<dbReference type="EC" id="3.1.1.29" evidence="1"/>
<dbReference type="EMBL" id="AL590842">
    <property type="protein sequence ID" value="CAL20648.1"/>
    <property type="molecule type" value="Genomic_DNA"/>
</dbReference>
<dbReference type="EMBL" id="AE009952">
    <property type="protein sequence ID" value="AAM85856.1"/>
    <property type="status" value="ALT_INIT"/>
    <property type="molecule type" value="Genomic_DNA"/>
</dbReference>
<dbReference type="EMBL" id="AE017042">
    <property type="protein sequence ID" value="AAS62079.1"/>
    <property type="status" value="ALT_INIT"/>
    <property type="molecule type" value="Genomic_DNA"/>
</dbReference>
<dbReference type="PIR" id="AE0245">
    <property type="entry name" value="AE0245"/>
</dbReference>
<dbReference type="RefSeq" id="WP_002218168.1">
    <property type="nucleotide sequence ID" value="NZ_WUCM01000039.1"/>
</dbReference>
<dbReference type="RefSeq" id="YP_002346997.1">
    <property type="nucleotide sequence ID" value="NC_003143.1"/>
</dbReference>
<dbReference type="SMR" id="Q8ZEY4"/>
<dbReference type="STRING" id="214092.YPO2011"/>
<dbReference type="PaxDb" id="214092-YPO2011"/>
<dbReference type="DNASU" id="1147244"/>
<dbReference type="EnsemblBacteria" id="AAS62079">
    <property type="protein sequence ID" value="AAS62079"/>
    <property type="gene ID" value="YP_1859"/>
</dbReference>
<dbReference type="GeneID" id="96665494"/>
<dbReference type="KEGG" id="ype:YPO2011"/>
<dbReference type="KEGG" id="ypj:CH55_723"/>
<dbReference type="KEGG" id="ypk:y2297"/>
<dbReference type="KEGG" id="ypl:CH46_3101"/>
<dbReference type="KEGG" id="ypm:YP_1859"/>
<dbReference type="KEGG" id="ypv:BZ15_1527"/>
<dbReference type="KEGG" id="ypw:CH59_4114"/>
<dbReference type="PATRIC" id="fig|214092.21.peg.2394"/>
<dbReference type="eggNOG" id="COG0193">
    <property type="taxonomic scope" value="Bacteria"/>
</dbReference>
<dbReference type="HOGENOM" id="CLU_062456_3_1_6"/>
<dbReference type="OMA" id="PNTYMNL"/>
<dbReference type="OrthoDB" id="9800507at2"/>
<dbReference type="Proteomes" id="UP000000815">
    <property type="component" value="Chromosome"/>
</dbReference>
<dbReference type="Proteomes" id="UP000001019">
    <property type="component" value="Chromosome"/>
</dbReference>
<dbReference type="Proteomes" id="UP000002490">
    <property type="component" value="Chromosome"/>
</dbReference>
<dbReference type="GO" id="GO:0005737">
    <property type="term" value="C:cytoplasm"/>
    <property type="evidence" value="ECO:0007669"/>
    <property type="project" value="UniProtKB-SubCell"/>
</dbReference>
<dbReference type="GO" id="GO:0004045">
    <property type="term" value="F:peptidyl-tRNA hydrolase activity"/>
    <property type="evidence" value="ECO:0000318"/>
    <property type="project" value="GO_Central"/>
</dbReference>
<dbReference type="GO" id="GO:0000049">
    <property type="term" value="F:tRNA binding"/>
    <property type="evidence" value="ECO:0007669"/>
    <property type="project" value="UniProtKB-UniRule"/>
</dbReference>
<dbReference type="GO" id="GO:0006515">
    <property type="term" value="P:protein quality control for misfolded or incompletely synthesized proteins"/>
    <property type="evidence" value="ECO:0007669"/>
    <property type="project" value="UniProtKB-UniRule"/>
</dbReference>
<dbReference type="GO" id="GO:0072344">
    <property type="term" value="P:rescue of stalled ribosome"/>
    <property type="evidence" value="ECO:0007669"/>
    <property type="project" value="UniProtKB-UniRule"/>
</dbReference>
<dbReference type="CDD" id="cd00462">
    <property type="entry name" value="PTH"/>
    <property type="match status" value="1"/>
</dbReference>
<dbReference type="FunFam" id="3.40.50.1470:FF:000001">
    <property type="entry name" value="Peptidyl-tRNA hydrolase"/>
    <property type="match status" value="1"/>
</dbReference>
<dbReference type="Gene3D" id="3.40.50.1470">
    <property type="entry name" value="Peptidyl-tRNA hydrolase"/>
    <property type="match status" value="1"/>
</dbReference>
<dbReference type="HAMAP" id="MF_00083">
    <property type="entry name" value="Pept_tRNA_hydro_bact"/>
    <property type="match status" value="1"/>
</dbReference>
<dbReference type="InterPro" id="IPR001328">
    <property type="entry name" value="Pept_tRNA_hydro"/>
</dbReference>
<dbReference type="InterPro" id="IPR018171">
    <property type="entry name" value="Pept_tRNA_hydro_CS"/>
</dbReference>
<dbReference type="InterPro" id="IPR036416">
    <property type="entry name" value="Pept_tRNA_hydro_sf"/>
</dbReference>
<dbReference type="NCBIfam" id="TIGR00447">
    <property type="entry name" value="pth"/>
    <property type="match status" value="1"/>
</dbReference>
<dbReference type="PANTHER" id="PTHR17224">
    <property type="entry name" value="PEPTIDYL-TRNA HYDROLASE"/>
    <property type="match status" value="1"/>
</dbReference>
<dbReference type="PANTHER" id="PTHR17224:SF1">
    <property type="entry name" value="PEPTIDYL-TRNA HYDROLASE"/>
    <property type="match status" value="1"/>
</dbReference>
<dbReference type="Pfam" id="PF01195">
    <property type="entry name" value="Pept_tRNA_hydro"/>
    <property type="match status" value="1"/>
</dbReference>
<dbReference type="SUPFAM" id="SSF53178">
    <property type="entry name" value="Peptidyl-tRNA hydrolase-like"/>
    <property type="match status" value="1"/>
</dbReference>
<dbReference type="PROSITE" id="PS01195">
    <property type="entry name" value="PEPT_TRNA_HYDROL_1"/>
    <property type="match status" value="1"/>
</dbReference>
<dbReference type="PROSITE" id="PS01196">
    <property type="entry name" value="PEPT_TRNA_HYDROL_2"/>
    <property type="match status" value="1"/>
</dbReference>
<comment type="function">
    <text evidence="1">Hydrolyzes ribosome-free peptidyl-tRNAs (with 1 or more amino acids incorporated), which drop off the ribosome during protein synthesis, or as a result of ribosome stalling.</text>
</comment>
<comment type="function">
    <text evidence="1">Catalyzes the release of premature peptidyl moieties from peptidyl-tRNA molecules trapped in stalled 50S ribosomal subunits, and thus maintains levels of free tRNAs and 50S ribosomes.</text>
</comment>
<comment type="catalytic activity">
    <reaction evidence="1">
        <text>an N-acyl-L-alpha-aminoacyl-tRNA + H2O = an N-acyl-L-amino acid + a tRNA + H(+)</text>
        <dbReference type="Rhea" id="RHEA:54448"/>
        <dbReference type="Rhea" id="RHEA-COMP:10123"/>
        <dbReference type="Rhea" id="RHEA-COMP:13883"/>
        <dbReference type="ChEBI" id="CHEBI:15377"/>
        <dbReference type="ChEBI" id="CHEBI:15378"/>
        <dbReference type="ChEBI" id="CHEBI:59874"/>
        <dbReference type="ChEBI" id="CHEBI:78442"/>
        <dbReference type="ChEBI" id="CHEBI:138191"/>
        <dbReference type="EC" id="3.1.1.29"/>
    </reaction>
</comment>
<comment type="subunit">
    <text evidence="1">Monomer.</text>
</comment>
<comment type="subcellular location">
    <subcellularLocation>
        <location evidence="1">Cytoplasm</location>
    </subcellularLocation>
</comment>
<comment type="similarity">
    <text evidence="1">Belongs to the PTH family.</text>
</comment>
<comment type="sequence caution" evidence="2">
    <conflict type="erroneous initiation">
        <sequence resource="EMBL-CDS" id="AAM85856"/>
    </conflict>
    <text>Extended N-terminus.</text>
</comment>
<comment type="sequence caution" evidence="2">
    <conflict type="erroneous initiation">
        <sequence resource="EMBL-CDS" id="AAS62079"/>
    </conflict>
    <text>Extended N-terminus.</text>
</comment>
<protein>
    <recommendedName>
        <fullName evidence="1">Peptidyl-tRNA hydrolase</fullName>
        <shortName evidence="1">Pth</shortName>
        <ecNumber evidence="1">3.1.1.29</ecNumber>
    </recommendedName>
</protein>
<name>PTH_YERPE</name>
<gene>
    <name evidence="1" type="primary">pth</name>
    <name type="ordered locus">YPO2011</name>
    <name type="ordered locus">y2297</name>
    <name type="ordered locus">YP_1859</name>
</gene>
<proteinExistence type="inferred from homology"/>
<sequence>MSSIKLIVGLANPGAEYAQTRHNAGAWYVDLLAERHNQSLKEESKFFGYTARLNLAGQDIRLLVPATFMNLSGKAVAAMASFYRILPEEILVAHDELDILPGMAKLKLGGGNGGHNGLKDIQNKLGNNPNFYRLRIGIGHPGDKSKVTGFVLGKPPASEQTLIDDAIDESIRCTEVLLNEGMTKAMNRLHAFKASA</sequence>
<organism>
    <name type="scientific">Yersinia pestis</name>
    <dbReference type="NCBI Taxonomy" id="632"/>
    <lineage>
        <taxon>Bacteria</taxon>
        <taxon>Pseudomonadati</taxon>
        <taxon>Pseudomonadota</taxon>
        <taxon>Gammaproteobacteria</taxon>
        <taxon>Enterobacterales</taxon>
        <taxon>Yersiniaceae</taxon>
        <taxon>Yersinia</taxon>
    </lineage>
</organism>